<reference key="1">
    <citation type="journal article" date="2003" name="Nat. Genet.">
        <title>Comparative analysis of the genome sequences of Bordetella pertussis, Bordetella parapertussis and Bordetella bronchiseptica.</title>
        <authorList>
            <person name="Parkhill J."/>
            <person name="Sebaihia M."/>
            <person name="Preston A."/>
            <person name="Murphy L.D."/>
            <person name="Thomson N.R."/>
            <person name="Harris D.E."/>
            <person name="Holden M.T.G."/>
            <person name="Churcher C.M."/>
            <person name="Bentley S.D."/>
            <person name="Mungall K.L."/>
            <person name="Cerdeno-Tarraga A.-M."/>
            <person name="Temple L."/>
            <person name="James K.D."/>
            <person name="Harris B."/>
            <person name="Quail M.A."/>
            <person name="Achtman M."/>
            <person name="Atkin R."/>
            <person name="Baker S."/>
            <person name="Basham D."/>
            <person name="Bason N."/>
            <person name="Cherevach I."/>
            <person name="Chillingworth T."/>
            <person name="Collins M."/>
            <person name="Cronin A."/>
            <person name="Davis P."/>
            <person name="Doggett J."/>
            <person name="Feltwell T."/>
            <person name="Goble A."/>
            <person name="Hamlin N."/>
            <person name="Hauser H."/>
            <person name="Holroyd S."/>
            <person name="Jagels K."/>
            <person name="Leather S."/>
            <person name="Moule S."/>
            <person name="Norberczak H."/>
            <person name="O'Neil S."/>
            <person name="Ormond D."/>
            <person name="Price C."/>
            <person name="Rabbinowitsch E."/>
            <person name="Rutter S."/>
            <person name="Sanders M."/>
            <person name="Saunders D."/>
            <person name="Seeger K."/>
            <person name="Sharp S."/>
            <person name="Simmonds M."/>
            <person name="Skelton J."/>
            <person name="Squares R."/>
            <person name="Squares S."/>
            <person name="Stevens K."/>
            <person name="Unwin L."/>
            <person name="Whitehead S."/>
            <person name="Barrell B.G."/>
            <person name="Maskell D.J."/>
        </authorList>
    </citation>
    <scope>NUCLEOTIDE SEQUENCE [LARGE SCALE GENOMIC DNA]</scope>
    <source>
        <strain>12822 / ATCC BAA-587 / NCTC 13253</strain>
    </source>
</reference>
<proteinExistence type="inferred from homology"/>
<protein>
    <recommendedName>
        <fullName evidence="1">UPF0391 membrane protein BPP3186</fullName>
    </recommendedName>
</protein>
<feature type="chain" id="PRO_0000256714" description="UPF0391 membrane protein BPP3186">
    <location>
        <begin position="1"/>
        <end position="53"/>
    </location>
</feature>
<feature type="transmembrane region" description="Helical" evidence="1">
    <location>
        <begin position="5"/>
        <end position="25"/>
    </location>
</feature>
<feature type="transmembrane region" description="Helical" evidence="1">
    <location>
        <begin position="30"/>
        <end position="50"/>
    </location>
</feature>
<dbReference type="EMBL" id="BX640432">
    <property type="protein sequence ID" value="CAE38471.1"/>
    <property type="molecule type" value="Genomic_DNA"/>
</dbReference>
<dbReference type="RefSeq" id="WP_003813570.1">
    <property type="nucleotide sequence ID" value="NC_002928.3"/>
</dbReference>
<dbReference type="KEGG" id="bpa:BPP3186"/>
<dbReference type="HOGENOM" id="CLU_187346_0_1_4"/>
<dbReference type="Proteomes" id="UP000001421">
    <property type="component" value="Chromosome"/>
</dbReference>
<dbReference type="GO" id="GO:0005886">
    <property type="term" value="C:plasma membrane"/>
    <property type="evidence" value="ECO:0007669"/>
    <property type="project" value="UniProtKB-SubCell"/>
</dbReference>
<dbReference type="HAMAP" id="MF_01361">
    <property type="entry name" value="UPF0391"/>
    <property type="match status" value="1"/>
</dbReference>
<dbReference type="InterPro" id="IPR009760">
    <property type="entry name" value="DUF1328"/>
</dbReference>
<dbReference type="NCBIfam" id="NF010226">
    <property type="entry name" value="PRK13682.1-1"/>
    <property type="match status" value="1"/>
</dbReference>
<dbReference type="NCBIfam" id="NF010229">
    <property type="entry name" value="PRK13682.1-4"/>
    <property type="match status" value="1"/>
</dbReference>
<dbReference type="Pfam" id="PF07043">
    <property type="entry name" value="DUF1328"/>
    <property type="match status" value="1"/>
</dbReference>
<dbReference type="PIRSF" id="PIRSF036466">
    <property type="entry name" value="UCP036466"/>
    <property type="match status" value="1"/>
</dbReference>
<evidence type="ECO:0000255" key="1">
    <source>
        <dbReference type="HAMAP-Rule" id="MF_01361"/>
    </source>
</evidence>
<sequence>MLHYAVVFFVIAIIAAVLGFGGIAAGAAGIAKILFFVFLVLALLSILGGVFRK</sequence>
<comment type="subcellular location">
    <subcellularLocation>
        <location evidence="1">Cell membrane</location>
        <topology evidence="1">Multi-pass membrane protein</topology>
    </subcellularLocation>
</comment>
<comment type="similarity">
    <text evidence="1">Belongs to the UPF0391 family.</text>
</comment>
<accession>Q7W5V1</accession>
<organism>
    <name type="scientific">Bordetella parapertussis (strain 12822 / ATCC BAA-587 / NCTC 13253)</name>
    <dbReference type="NCBI Taxonomy" id="257311"/>
    <lineage>
        <taxon>Bacteria</taxon>
        <taxon>Pseudomonadati</taxon>
        <taxon>Pseudomonadota</taxon>
        <taxon>Betaproteobacteria</taxon>
        <taxon>Burkholderiales</taxon>
        <taxon>Alcaligenaceae</taxon>
        <taxon>Bordetella</taxon>
    </lineage>
</organism>
<name>Y3186_BORPA</name>
<gene>
    <name type="ordered locus">BPP3186</name>
</gene>
<keyword id="KW-1003">Cell membrane</keyword>
<keyword id="KW-0472">Membrane</keyword>
<keyword id="KW-0812">Transmembrane</keyword>
<keyword id="KW-1133">Transmembrane helix</keyword>